<keyword id="KW-0418">Kinase</keyword>
<keyword id="KW-1185">Reference proteome</keyword>
<keyword id="KW-0808">Transferase</keyword>
<sequence>MTHESDDPSLDWLEAELEDSLDEDFEIEFSEPMLSMEIRRIYKDQRPDLLDRQVYFRNLLRLQAELIKLQDWVQHTNSKVLIIMEGRDAAGKGGVIKRITQRLNPRIARVVALPAPSRREQSQWYFQRYVPYLPSGGEMVLFDRSWYNRAGVERVMGFATEDQVEQFFQDVPEFERMLVRSGIILLKYWFSITDEEQQLRFLMRVHDPMKQWKLSPMDLESRIRWEQYTKAKEQMFSRTNIPEAPWYIVEGNDKKRERLNCIEHLLSKIPYEDIPHEKVTLPDRRYNPDYERQVLPDELYVPKVY</sequence>
<name>PK21A_RUEPO</name>
<dbReference type="EC" id="2.7.4.-" evidence="1"/>
<dbReference type="EMBL" id="CP000031">
    <property type="protein sequence ID" value="AAV93549.1"/>
    <property type="molecule type" value="Genomic_DNA"/>
</dbReference>
<dbReference type="RefSeq" id="WP_011045992.1">
    <property type="nucleotide sequence ID" value="NC_003911.12"/>
</dbReference>
<dbReference type="SMR" id="Q5LX16"/>
<dbReference type="STRING" id="246200.SPO0224"/>
<dbReference type="PaxDb" id="246200-SPO0224"/>
<dbReference type="KEGG" id="sil:SPO0224"/>
<dbReference type="eggNOG" id="COG2326">
    <property type="taxonomic scope" value="Bacteria"/>
</dbReference>
<dbReference type="HOGENOM" id="CLU_048699_3_0_5"/>
<dbReference type="OrthoDB" id="9775224at2"/>
<dbReference type="BRENDA" id="2.7.4.1">
    <property type="organism ID" value="8123"/>
</dbReference>
<dbReference type="Proteomes" id="UP000001023">
    <property type="component" value="Chromosome"/>
</dbReference>
<dbReference type="GO" id="GO:0008976">
    <property type="term" value="F:polyphosphate kinase activity"/>
    <property type="evidence" value="ECO:0007669"/>
    <property type="project" value="UniProtKB-EC"/>
</dbReference>
<dbReference type="GO" id="GO:0006793">
    <property type="term" value="P:phosphorus metabolic process"/>
    <property type="evidence" value="ECO:0007669"/>
    <property type="project" value="InterPro"/>
</dbReference>
<dbReference type="FunFam" id="3.40.50.300:FF:002388">
    <property type="entry name" value="Polyphosphate:NDP phosphotransferase 2"/>
    <property type="match status" value="1"/>
</dbReference>
<dbReference type="Gene3D" id="3.40.50.300">
    <property type="entry name" value="P-loop containing nucleotide triphosphate hydrolases"/>
    <property type="match status" value="1"/>
</dbReference>
<dbReference type="InterPro" id="IPR027417">
    <property type="entry name" value="P-loop_NTPase"/>
</dbReference>
<dbReference type="InterPro" id="IPR016898">
    <property type="entry name" value="Polyphosphate_phosphotransfera"/>
</dbReference>
<dbReference type="InterPro" id="IPR022488">
    <property type="entry name" value="PPK2-related"/>
</dbReference>
<dbReference type="InterPro" id="IPR022486">
    <property type="entry name" value="PPK2_PA0141"/>
</dbReference>
<dbReference type="NCBIfam" id="TIGR03707">
    <property type="entry name" value="PPK2_P_aer"/>
    <property type="match status" value="1"/>
</dbReference>
<dbReference type="PANTHER" id="PTHR34383:SF1">
    <property type="entry name" value="ADP-POLYPHOSPHATE PHOSPHOTRANSFERASE"/>
    <property type="match status" value="1"/>
</dbReference>
<dbReference type="PANTHER" id="PTHR34383">
    <property type="entry name" value="POLYPHOSPHATE:AMP PHOSPHOTRANSFERASE-RELATED"/>
    <property type="match status" value="1"/>
</dbReference>
<dbReference type="Pfam" id="PF03976">
    <property type="entry name" value="PPK2"/>
    <property type="match status" value="1"/>
</dbReference>
<dbReference type="PIRSF" id="PIRSF028756">
    <property type="entry name" value="PPK2_prd"/>
    <property type="match status" value="1"/>
</dbReference>
<dbReference type="SUPFAM" id="SSF52540">
    <property type="entry name" value="P-loop containing nucleoside triphosphate hydrolases"/>
    <property type="match status" value="1"/>
</dbReference>
<feature type="chain" id="PRO_0000442593" description="NDP-polyphosphate phosphotransferase 1">
    <location>
        <begin position="1"/>
        <end position="305"/>
    </location>
</feature>
<gene>
    <name evidence="4" type="ordered locus">SPO0224</name>
</gene>
<reference key="1">
    <citation type="journal article" date="2004" name="Nature">
        <title>Genome sequence of Silicibacter pomeroyi reveals adaptations to the marine environment.</title>
        <authorList>
            <person name="Moran M.A."/>
            <person name="Buchan A."/>
            <person name="Gonzalez J.M."/>
            <person name="Heidelberg J.F."/>
            <person name="Whitman W.B."/>
            <person name="Kiene R.P."/>
            <person name="Henriksen J.R."/>
            <person name="King G.M."/>
            <person name="Belas R."/>
            <person name="Fuqua C."/>
            <person name="Brinkac L.M."/>
            <person name="Lewis M."/>
            <person name="Johri S."/>
            <person name="Weaver B."/>
            <person name="Pai G."/>
            <person name="Eisen J.A."/>
            <person name="Rahe E."/>
            <person name="Sheldon W.M."/>
            <person name="Ye W."/>
            <person name="Miller T.R."/>
            <person name="Carlton J."/>
            <person name="Rasko D.A."/>
            <person name="Paulsen I.T."/>
            <person name="Ren Q."/>
            <person name="Daugherty S.C."/>
            <person name="DeBoy R.T."/>
            <person name="Dodson R.J."/>
            <person name="Durkin A.S."/>
            <person name="Madupu R."/>
            <person name="Nelson W.C."/>
            <person name="Sullivan S.A."/>
            <person name="Rosovitz M.J."/>
            <person name="Haft D.H."/>
            <person name="Selengut J."/>
            <person name="Ward N."/>
        </authorList>
    </citation>
    <scope>NUCLEOTIDE SEQUENCE [LARGE SCALE GENOMIC DNA]</scope>
    <source>
        <strain>ATCC 700808 / DSM 15171 / DSS-3</strain>
    </source>
</reference>
<reference key="2">
    <citation type="journal article" date="2014" name="Stand. Genomic Sci.">
        <title>An updated genome annotation for the model marine bacterium Ruegeria pomeroyi DSS-3.</title>
        <authorList>
            <person name="Rivers A.R."/>
            <person name="Smith C.B."/>
            <person name="Moran M.A."/>
        </authorList>
    </citation>
    <scope>GENOME REANNOTATION</scope>
    <source>
        <strain>ATCC 700808 / DSM 15171 / DSS-3</strain>
    </source>
</reference>
<reference key="3">
    <citation type="journal article" date="2014" name="Biotechnol. Lett.">
        <title>Degradation of polyphosphates by polyphosphate kinases from Ruegeria pomeroyi.</title>
        <authorList>
            <person name="Achbergerova L."/>
            <person name="Nahalka J."/>
        </authorList>
    </citation>
    <scope>FUNCTION</scope>
    <scope>CATALYTIC ACTIVITY</scope>
    <scope>ACTIVITY REGULATION</scope>
    <scope>BIOPHYSICOCHEMICAL PROPERTIES</scope>
    <source>
        <strain>ATCC 700808 / DSM 15171 / DSS-3</strain>
    </source>
</reference>
<evidence type="ECO:0000269" key="1">
    <source>
    </source>
</evidence>
<evidence type="ECO:0000303" key="2">
    <source>
    </source>
</evidence>
<evidence type="ECO:0000305" key="3"/>
<evidence type="ECO:0000312" key="4">
    <source>
        <dbReference type="EMBL" id="AAV93549.1"/>
    </source>
</evidence>
<proteinExistence type="evidence at protein level"/>
<accession>Q5LX16</accession>
<protein>
    <recommendedName>
        <fullName evidence="3">NDP-polyphosphate phosphotransferase 1</fullName>
        <ecNumber evidence="1">2.7.4.-</ecNumber>
    </recommendedName>
    <alternativeName>
        <fullName evidence="3">Polyphosphate kinase PPK2 1</fullName>
    </alternativeName>
    <alternativeName>
        <fullName evidence="2">RpPPK2-1</fullName>
    </alternativeName>
</protein>
<comment type="function">
    <text evidence="1">Uses inorganic polyphosphate (polyP) as a donor to convert NDP to NTP. PolyP hydrolysis is slightly faster with GDP, but it can also use ADP, CDP and UDP.</text>
</comment>
<comment type="catalytic activity">
    <reaction evidence="1">
        <text>[phosphate](n) + ATP = [phosphate](n+1) + ADP</text>
        <dbReference type="Rhea" id="RHEA:19573"/>
        <dbReference type="Rhea" id="RHEA-COMP:9859"/>
        <dbReference type="Rhea" id="RHEA-COMP:14280"/>
        <dbReference type="ChEBI" id="CHEBI:16838"/>
        <dbReference type="ChEBI" id="CHEBI:30616"/>
        <dbReference type="ChEBI" id="CHEBI:456216"/>
    </reaction>
</comment>
<comment type="catalytic activity">
    <reaction evidence="1">
        <text>[phosphate](n) + CTP = [phosphate](n+1) + CDP</text>
        <dbReference type="Rhea" id="RHEA:55408"/>
        <dbReference type="Rhea" id="RHEA-COMP:9859"/>
        <dbReference type="Rhea" id="RHEA-COMP:14280"/>
        <dbReference type="ChEBI" id="CHEBI:16838"/>
        <dbReference type="ChEBI" id="CHEBI:37563"/>
        <dbReference type="ChEBI" id="CHEBI:58069"/>
    </reaction>
</comment>
<comment type="catalytic activity">
    <reaction evidence="1">
        <text>[phosphate](n) + GTP = [phosphate](n+1) + GDP</text>
        <dbReference type="Rhea" id="RHEA:55412"/>
        <dbReference type="Rhea" id="RHEA-COMP:9859"/>
        <dbReference type="Rhea" id="RHEA-COMP:14280"/>
        <dbReference type="ChEBI" id="CHEBI:16838"/>
        <dbReference type="ChEBI" id="CHEBI:37565"/>
        <dbReference type="ChEBI" id="CHEBI:58189"/>
    </reaction>
</comment>
<comment type="catalytic activity">
    <reaction evidence="1">
        <text>[phosphate](n) + UTP = [phosphate](n+1) + UDP</text>
        <dbReference type="Rhea" id="RHEA:55404"/>
        <dbReference type="Rhea" id="RHEA-COMP:9859"/>
        <dbReference type="Rhea" id="RHEA-COMP:14280"/>
        <dbReference type="ChEBI" id="CHEBI:16838"/>
        <dbReference type="ChEBI" id="CHEBI:46398"/>
        <dbReference type="ChEBI" id="CHEBI:58223"/>
    </reaction>
</comment>
<comment type="activity regulation">
    <text evidence="1">Shows little dependence on metals.</text>
</comment>
<comment type="biophysicochemical properties">
    <kinetics>
        <KM evidence="1">1.2 mM for GDP</KM>
        <text evidence="1">kcat is 251 min(-1) with GDP as substrate.</text>
    </kinetics>
    <phDependence>
        <text evidence="1">Has two pH optima at 8 and 10.</text>
    </phDependence>
</comment>
<comment type="similarity">
    <text evidence="3">Belongs to the polyphosphate kinase 2 (PPK2) family. Class I subfamily.</text>
</comment>
<organism>
    <name type="scientific">Ruegeria pomeroyi (strain ATCC 700808 / DSM 15171 / DSS-3)</name>
    <name type="common">Silicibacter pomeroyi</name>
    <dbReference type="NCBI Taxonomy" id="246200"/>
    <lineage>
        <taxon>Bacteria</taxon>
        <taxon>Pseudomonadati</taxon>
        <taxon>Pseudomonadota</taxon>
        <taxon>Alphaproteobacteria</taxon>
        <taxon>Rhodobacterales</taxon>
        <taxon>Roseobacteraceae</taxon>
        <taxon>Ruegeria</taxon>
    </lineage>
</organism>